<accession>P43507</accession>
<accession>Q9TW93</accession>
<feature type="signal peptide" evidence="2">
    <location>
        <begin position="1"/>
        <end position="16"/>
    </location>
</feature>
<feature type="propeptide" id="PRO_0000026192" evidence="2">
    <location>
        <begin position="17"/>
        <end position="91"/>
    </location>
</feature>
<feature type="chain" id="PRO_0000026193" description="Cathepsin B-like cysteine proteinase 3">
    <location>
        <begin position="92"/>
        <end position="370"/>
    </location>
</feature>
<feature type="active site" evidence="1">
    <location>
        <position position="120"/>
    </location>
</feature>
<feature type="active site" evidence="1">
    <location>
        <position position="284"/>
    </location>
</feature>
<feature type="active site" evidence="1">
    <location>
        <position position="304"/>
    </location>
</feature>
<feature type="glycosylation site" description="N-linked (GlcNAc...) asparagine" evidence="2">
    <location>
        <position position="138"/>
    </location>
</feature>
<feature type="disulfide bond" evidence="1">
    <location>
        <begin position="105"/>
        <end position="134"/>
    </location>
</feature>
<feature type="disulfide bond" evidence="1">
    <location>
        <begin position="117"/>
        <end position="162"/>
    </location>
</feature>
<feature type="disulfide bond" evidence="1">
    <location>
        <begin position="153"/>
        <end position="210"/>
    </location>
</feature>
<feature type="disulfide bond" evidence="1">
    <location>
        <begin position="154"/>
        <end position="158"/>
    </location>
</feature>
<feature type="disulfide bond" evidence="1">
    <location>
        <begin position="190"/>
        <end position="214"/>
    </location>
</feature>
<feature type="disulfide bond" evidence="1">
    <location>
        <begin position="198"/>
        <end position="202"/>
    </location>
</feature>
<keyword id="KW-1015">Disulfide bond</keyword>
<keyword id="KW-0325">Glycoprotein</keyword>
<keyword id="KW-0378">Hydrolase</keyword>
<keyword id="KW-0645">Protease</keyword>
<keyword id="KW-1185">Reference proteome</keyword>
<keyword id="KW-0732">Signal</keyword>
<keyword id="KW-0788">Thiol protease</keyword>
<keyword id="KW-0865">Zymogen</keyword>
<name>CPR3_CAEEL</name>
<organism>
    <name type="scientific">Caenorhabditis elegans</name>
    <dbReference type="NCBI Taxonomy" id="6239"/>
    <lineage>
        <taxon>Eukaryota</taxon>
        <taxon>Metazoa</taxon>
        <taxon>Ecdysozoa</taxon>
        <taxon>Nematoda</taxon>
        <taxon>Chromadorea</taxon>
        <taxon>Rhabditida</taxon>
        <taxon>Rhabditina</taxon>
        <taxon>Rhabditomorpha</taxon>
        <taxon>Rhabditoidea</taxon>
        <taxon>Rhabditidae</taxon>
        <taxon>Peloderinae</taxon>
        <taxon>Caenorhabditis</taxon>
    </lineage>
</organism>
<sequence>MLKVYFLALFLAGCSAFVLDEIRGINIGQSPQKVLVDHVNTVQTSWVAEHNEISEFEMKFKVMDVKFAEPLEKDSDVASELFVRGEIVPEPLPDTFDAREKWPDCNTIKLIRNQATCGSCWAFGAAEVISDRVCIQSNGTQQPVISVEDILSCCGTTCGYGCKGGYSIEALRFWASSGAVTGGDYGGHGCMPYSFAPCTKNCPESTTPSCKTTCQSSYKTEEYKKDKHYGASAYKVTTTKSVTEIQTEIYHYGPVEASYKVYEDFYHYKSGVYHYTSGKLVGGHAVKIIGWGVENGVDYWLIANSWGTSFGEKGFFKIRRGTNECQIEGNVVAGIAKLGTHSETYEDDGGAATSCSFIMCTLMVLTYYFV</sequence>
<dbReference type="EC" id="3.4.22.-"/>
<dbReference type="EMBL" id="L39890">
    <property type="protein sequence ID" value="AAA98788.1"/>
    <property type="molecule type" value="mRNA"/>
</dbReference>
<dbReference type="EMBL" id="L39925">
    <property type="protein sequence ID" value="AAA98782.1"/>
    <property type="molecule type" value="Genomic_DNA"/>
</dbReference>
<dbReference type="EMBL" id="Z81119">
    <property type="protein sequence ID" value="CAB61032.2"/>
    <property type="molecule type" value="Genomic_DNA"/>
</dbReference>
<dbReference type="EMBL" id="Z82057">
    <property type="protein sequence ID" value="CAB61032.2"/>
    <property type="status" value="JOINED"/>
    <property type="molecule type" value="Genomic_DNA"/>
</dbReference>
<dbReference type="PIR" id="T37282">
    <property type="entry name" value="T37282"/>
</dbReference>
<dbReference type="RefSeq" id="NP_506790.1">
    <property type="nucleotide sequence ID" value="NM_074389.5"/>
</dbReference>
<dbReference type="SMR" id="P43507"/>
<dbReference type="FunCoup" id="P43507">
    <property type="interactions" value="182"/>
</dbReference>
<dbReference type="STRING" id="6239.T10H4.12.1"/>
<dbReference type="MEROPS" id="C01.A33"/>
<dbReference type="GlyCosmos" id="P43507">
    <property type="glycosylation" value="1 site, No reported glycans"/>
</dbReference>
<dbReference type="PaxDb" id="6239-T10H4.12"/>
<dbReference type="PeptideAtlas" id="P43507"/>
<dbReference type="EnsemblMetazoa" id="T10H4.12.1">
    <property type="protein sequence ID" value="T10H4.12.1"/>
    <property type="gene ID" value="WBGene00000783"/>
</dbReference>
<dbReference type="GeneID" id="180033"/>
<dbReference type="KEGG" id="cel:CELE_T10H4.12"/>
<dbReference type="UCSC" id="T10H4.12">
    <property type="organism name" value="c. elegans"/>
</dbReference>
<dbReference type="AGR" id="WB:WBGene00000783"/>
<dbReference type="CTD" id="180033"/>
<dbReference type="WormBase" id="T10H4.12">
    <property type="protein sequence ID" value="CE27590"/>
    <property type="gene ID" value="WBGene00000783"/>
    <property type="gene designation" value="cpr-3"/>
</dbReference>
<dbReference type="eggNOG" id="KOG1543">
    <property type="taxonomic scope" value="Eukaryota"/>
</dbReference>
<dbReference type="HOGENOM" id="CLU_012184_3_3_1"/>
<dbReference type="InParanoid" id="P43507"/>
<dbReference type="OMA" id="WANCTFL"/>
<dbReference type="OrthoDB" id="640249at2759"/>
<dbReference type="PhylomeDB" id="P43507"/>
<dbReference type="PRO" id="PR:P43507"/>
<dbReference type="Proteomes" id="UP000001940">
    <property type="component" value="Chromosome V"/>
</dbReference>
<dbReference type="Bgee" id="WBGene00000783">
    <property type="expression patterns" value="Expressed in adult organism and 2 other cell types or tissues"/>
</dbReference>
<dbReference type="GO" id="GO:0005615">
    <property type="term" value="C:extracellular space"/>
    <property type="evidence" value="ECO:0000318"/>
    <property type="project" value="GO_Central"/>
</dbReference>
<dbReference type="GO" id="GO:0005764">
    <property type="term" value="C:lysosome"/>
    <property type="evidence" value="ECO:0000318"/>
    <property type="project" value="GO_Central"/>
</dbReference>
<dbReference type="GO" id="GO:0004197">
    <property type="term" value="F:cysteine-type endopeptidase activity"/>
    <property type="evidence" value="ECO:0000318"/>
    <property type="project" value="GO_Central"/>
</dbReference>
<dbReference type="GO" id="GO:0045087">
    <property type="term" value="P:innate immune response"/>
    <property type="evidence" value="ECO:0007007"/>
    <property type="project" value="WormBase"/>
</dbReference>
<dbReference type="GO" id="GO:0051603">
    <property type="term" value="P:proteolysis involved in protein catabolic process"/>
    <property type="evidence" value="ECO:0000318"/>
    <property type="project" value="GO_Central"/>
</dbReference>
<dbReference type="CDD" id="cd02620">
    <property type="entry name" value="Peptidase_C1A_CathepsinB"/>
    <property type="match status" value="1"/>
</dbReference>
<dbReference type="FunFam" id="3.90.70.10:FF:000031">
    <property type="entry name" value="Cathepsin B"/>
    <property type="match status" value="1"/>
</dbReference>
<dbReference type="Gene3D" id="3.90.70.10">
    <property type="entry name" value="Cysteine proteinases"/>
    <property type="match status" value="1"/>
</dbReference>
<dbReference type="InterPro" id="IPR038765">
    <property type="entry name" value="Papain-like_cys_pep_sf"/>
</dbReference>
<dbReference type="InterPro" id="IPR025661">
    <property type="entry name" value="Pept_asp_AS"/>
</dbReference>
<dbReference type="InterPro" id="IPR000169">
    <property type="entry name" value="Pept_cys_AS"/>
</dbReference>
<dbReference type="InterPro" id="IPR025660">
    <property type="entry name" value="Pept_his_AS"/>
</dbReference>
<dbReference type="InterPro" id="IPR013128">
    <property type="entry name" value="Peptidase_C1A"/>
</dbReference>
<dbReference type="InterPro" id="IPR000668">
    <property type="entry name" value="Peptidase_C1A_C"/>
</dbReference>
<dbReference type="PANTHER" id="PTHR12411">
    <property type="entry name" value="CYSTEINE PROTEASE FAMILY C1-RELATED"/>
    <property type="match status" value="1"/>
</dbReference>
<dbReference type="Pfam" id="PF00112">
    <property type="entry name" value="Peptidase_C1"/>
    <property type="match status" value="1"/>
</dbReference>
<dbReference type="PRINTS" id="PR00705">
    <property type="entry name" value="PAPAIN"/>
</dbReference>
<dbReference type="SMART" id="SM00645">
    <property type="entry name" value="Pept_C1"/>
    <property type="match status" value="1"/>
</dbReference>
<dbReference type="SUPFAM" id="SSF54001">
    <property type="entry name" value="Cysteine proteinases"/>
    <property type="match status" value="1"/>
</dbReference>
<dbReference type="PROSITE" id="PS00640">
    <property type="entry name" value="THIOL_PROTEASE_ASN"/>
    <property type="match status" value="1"/>
</dbReference>
<dbReference type="PROSITE" id="PS00139">
    <property type="entry name" value="THIOL_PROTEASE_CYS"/>
    <property type="match status" value="1"/>
</dbReference>
<dbReference type="PROSITE" id="PS00639">
    <property type="entry name" value="THIOL_PROTEASE_HIS"/>
    <property type="match status" value="1"/>
</dbReference>
<reference key="1">
    <citation type="journal article" date="1996" name="DNA Cell Biol.">
        <title>Isolation and characterization of four developmentally regulated cathepsin B-like cysteine protease genes from the nematode Caenorhabditis elegans.</title>
        <authorList>
            <person name="Larminie C.G.C."/>
            <person name="Johnstone I.L."/>
        </authorList>
    </citation>
    <scope>NUCLEOTIDE SEQUENCE [GENOMIC DNA / MRNA]</scope>
    <source>
        <strain>Bristol N2</strain>
    </source>
</reference>
<reference key="2">
    <citation type="journal article" date="1998" name="Science">
        <title>Genome sequence of the nematode C. elegans: a platform for investigating biology.</title>
        <authorList>
            <consortium name="The C. elegans sequencing consortium"/>
        </authorList>
    </citation>
    <scope>NUCLEOTIDE SEQUENCE [LARGE SCALE GENOMIC DNA]</scope>
    <source>
        <strain>Bristol N2</strain>
    </source>
</reference>
<evidence type="ECO:0000250" key="1"/>
<evidence type="ECO:0000255" key="2"/>
<evidence type="ECO:0000255" key="3">
    <source>
        <dbReference type="PROSITE-ProRule" id="PRU10088"/>
    </source>
</evidence>
<evidence type="ECO:0000255" key="4">
    <source>
        <dbReference type="PROSITE-ProRule" id="PRU10089"/>
    </source>
</evidence>
<evidence type="ECO:0000255" key="5">
    <source>
        <dbReference type="PROSITE-ProRule" id="PRU10090"/>
    </source>
</evidence>
<protein>
    <recommendedName>
        <fullName>Cathepsin B-like cysteine proteinase 3</fullName>
        <ecNumber>3.4.22.-</ecNumber>
    </recommendedName>
    <alternativeName>
        <fullName>Cysteine protease-related 3</fullName>
    </alternativeName>
</protein>
<proteinExistence type="evidence at transcript level"/>
<gene>
    <name type="primary">cpr-3</name>
    <name type="ORF">T10H4.12</name>
</gene>
<comment type="similarity">
    <text evidence="3 4 5">Belongs to the peptidase C1 family.</text>
</comment>